<name>DAPE_SHEPA</name>
<keyword id="KW-0028">Amino-acid biosynthesis</keyword>
<keyword id="KW-0170">Cobalt</keyword>
<keyword id="KW-0220">Diaminopimelate biosynthesis</keyword>
<keyword id="KW-0378">Hydrolase</keyword>
<keyword id="KW-0457">Lysine biosynthesis</keyword>
<keyword id="KW-0479">Metal-binding</keyword>
<keyword id="KW-1185">Reference proteome</keyword>
<keyword id="KW-0862">Zinc</keyword>
<reference key="1">
    <citation type="submission" date="2007-10" db="EMBL/GenBank/DDBJ databases">
        <title>Complete sequence of Shewanella pealeana ATCC 700345.</title>
        <authorList>
            <consortium name="US DOE Joint Genome Institute"/>
            <person name="Copeland A."/>
            <person name="Lucas S."/>
            <person name="Lapidus A."/>
            <person name="Barry K."/>
            <person name="Glavina del Rio T."/>
            <person name="Dalin E."/>
            <person name="Tice H."/>
            <person name="Pitluck S."/>
            <person name="Chertkov O."/>
            <person name="Brettin T."/>
            <person name="Bruce D."/>
            <person name="Detter J.C."/>
            <person name="Han C."/>
            <person name="Schmutz J."/>
            <person name="Larimer F."/>
            <person name="Land M."/>
            <person name="Hauser L."/>
            <person name="Kyrpides N."/>
            <person name="Kim E."/>
            <person name="Zhao J.-S.Z."/>
            <person name="Manno D."/>
            <person name="Hawari J."/>
            <person name="Richardson P."/>
        </authorList>
    </citation>
    <scope>NUCLEOTIDE SEQUENCE [LARGE SCALE GENOMIC DNA]</scope>
    <source>
        <strain>ATCC 700345 / ANG-SQ1</strain>
    </source>
</reference>
<feature type="chain" id="PRO_0000375736" description="Succinyl-diaminopimelate desuccinylase">
    <location>
        <begin position="1"/>
        <end position="381"/>
    </location>
</feature>
<feature type="active site" evidence="1">
    <location>
        <position position="73"/>
    </location>
</feature>
<feature type="active site" description="Proton acceptor" evidence="1">
    <location>
        <position position="138"/>
    </location>
</feature>
<feature type="binding site" evidence="1">
    <location>
        <position position="71"/>
    </location>
    <ligand>
        <name>Zn(2+)</name>
        <dbReference type="ChEBI" id="CHEBI:29105"/>
        <label>1</label>
    </ligand>
</feature>
<feature type="binding site" evidence="1">
    <location>
        <position position="104"/>
    </location>
    <ligand>
        <name>Zn(2+)</name>
        <dbReference type="ChEBI" id="CHEBI:29105"/>
        <label>1</label>
    </ligand>
</feature>
<feature type="binding site" evidence="1">
    <location>
        <position position="104"/>
    </location>
    <ligand>
        <name>Zn(2+)</name>
        <dbReference type="ChEBI" id="CHEBI:29105"/>
        <label>2</label>
    </ligand>
</feature>
<feature type="binding site" evidence="1">
    <location>
        <position position="139"/>
    </location>
    <ligand>
        <name>Zn(2+)</name>
        <dbReference type="ChEBI" id="CHEBI:29105"/>
        <label>2</label>
    </ligand>
</feature>
<feature type="binding site" evidence="1">
    <location>
        <position position="167"/>
    </location>
    <ligand>
        <name>Zn(2+)</name>
        <dbReference type="ChEBI" id="CHEBI:29105"/>
        <label>1</label>
    </ligand>
</feature>
<feature type="binding site" evidence="1">
    <location>
        <position position="353"/>
    </location>
    <ligand>
        <name>Zn(2+)</name>
        <dbReference type="ChEBI" id="CHEBI:29105"/>
        <label>2</label>
    </ligand>
</feature>
<protein>
    <recommendedName>
        <fullName evidence="1">Succinyl-diaminopimelate desuccinylase</fullName>
        <shortName evidence="1">SDAP desuccinylase</shortName>
        <ecNumber evidence="1">3.5.1.18</ecNumber>
    </recommendedName>
    <alternativeName>
        <fullName evidence="1">N-succinyl-LL-2,6-diaminoheptanedioate amidohydrolase</fullName>
    </alternativeName>
</protein>
<proteinExistence type="inferred from homology"/>
<comment type="function">
    <text evidence="1">Catalyzes the hydrolysis of N-succinyl-L,L-diaminopimelic acid (SDAP), forming succinate and LL-2,6-diaminopimelate (DAP), an intermediate involved in the bacterial biosynthesis of lysine and meso-diaminopimelic acid, an essential component of bacterial cell walls.</text>
</comment>
<comment type="catalytic activity">
    <reaction evidence="1">
        <text>N-succinyl-(2S,6S)-2,6-diaminopimelate + H2O = (2S,6S)-2,6-diaminopimelate + succinate</text>
        <dbReference type="Rhea" id="RHEA:22608"/>
        <dbReference type="ChEBI" id="CHEBI:15377"/>
        <dbReference type="ChEBI" id="CHEBI:30031"/>
        <dbReference type="ChEBI" id="CHEBI:57609"/>
        <dbReference type="ChEBI" id="CHEBI:58087"/>
        <dbReference type="EC" id="3.5.1.18"/>
    </reaction>
</comment>
<comment type="cofactor">
    <cofactor evidence="1">
        <name>Zn(2+)</name>
        <dbReference type="ChEBI" id="CHEBI:29105"/>
    </cofactor>
    <cofactor evidence="1">
        <name>Co(2+)</name>
        <dbReference type="ChEBI" id="CHEBI:48828"/>
    </cofactor>
    <text evidence="1">Binds 2 Zn(2+) or Co(2+) ions per subunit.</text>
</comment>
<comment type="pathway">
    <text evidence="1">Amino-acid biosynthesis; L-lysine biosynthesis via DAP pathway; LL-2,6-diaminopimelate from (S)-tetrahydrodipicolinate (succinylase route): step 3/3.</text>
</comment>
<comment type="subunit">
    <text evidence="1">Homodimer.</text>
</comment>
<comment type="similarity">
    <text evidence="1">Belongs to the peptidase M20A family. DapE subfamily.</text>
</comment>
<accession>A8H424</accession>
<dbReference type="EC" id="3.5.1.18" evidence="1"/>
<dbReference type="EMBL" id="CP000851">
    <property type="protein sequence ID" value="ABV87311.1"/>
    <property type="molecule type" value="Genomic_DNA"/>
</dbReference>
<dbReference type="RefSeq" id="WP_012155227.1">
    <property type="nucleotide sequence ID" value="NC_009901.1"/>
</dbReference>
<dbReference type="SMR" id="A8H424"/>
<dbReference type="STRING" id="398579.Spea_1991"/>
<dbReference type="KEGG" id="spl:Spea_1991"/>
<dbReference type="eggNOG" id="COG0624">
    <property type="taxonomic scope" value="Bacteria"/>
</dbReference>
<dbReference type="HOGENOM" id="CLU_021802_4_0_6"/>
<dbReference type="OrthoDB" id="9809784at2"/>
<dbReference type="UniPathway" id="UPA00034">
    <property type="reaction ID" value="UER00021"/>
</dbReference>
<dbReference type="Proteomes" id="UP000002608">
    <property type="component" value="Chromosome"/>
</dbReference>
<dbReference type="GO" id="GO:0008777">
    <property type="term" value="F:acetylornithine deacetylase activity"/>
    <property type="evidence" value="ECO:0007669"/>
    <property type="project" value="TreeGrafter"/>
</dbReference>
<dbReference type="GO" id="GO:0050897">
    <property type="term" value="F:cobalt ion binding"/>
    <property type="evidence" value="ECO:0007669"/>
    <property type="project" value="UniProtKB-UniRule"/>
</dbReference>
<dbReference type="GO" id="GO:0009014">
    <property type="term" value="F:succinyl-diaminopimelate desuccinylase activity"/>
    <property type="evidence" value="ECO:0007669"/>
    <property type="project" value="UniProtKB-UniRule"/>
</dbReference>
<dbReference type="GO" id="GO:0008270">
    <property type="term" value="F:zinc ion binding"/>
    <property type="evidence" value="ECO:0007669"/>
    <property type="project" value="UniProtKB-UniRule"/>
</dbReference>
<dbReference type="GO" id="GO:0019877">
    <property type="term" value="P:diaminopimelate biosynthetic process"/>
    <property type="evidence" value="ECO:0007669"/>
    <property type="project" value="UniProtKB-UniRule"/>
</dbReference>
<dbReference type="GO" id="GO:0006526">
    <property type="term" value="P:L-arginine biosynthetic process"/>
    <property type="evidence" value="ECO:0007669"/>
    <property type="project" value="TreeGrafter"/>
</dbReference>
<dbReference type="GO" id="GO:0009089">
    <property type="term" value="P:lysine biosynthetic process via diaminopimelate"/>
    <property type="evidence" value="ECO:0007669"/>
    <property type="project" value="UniProtKB-UniRule"/>
</dbReference>
<dbReference type="CDD" id="cd03891">
    <property type="entry name" value="M20_DapE_proteobac"/>
    <property type="match status" value="1"/>
</dbReference>
<dbReference type="FunFam" id="3.30.70.360:FF:000011">
    <property type="entry name" value="Succinyl-diaminopimelate desuccinylase"/>
    <property type="match status" value="1"/>
</dbReference>
<dbReference type="FunFam" id="3.40.630.10:FF:000005">
    <property type="entry name" value="Succinyl-diaminopimelate desuccinylase"/>
    <property type="match status" value="1"/>
</dbReference>
<dbReference type="Gene3D" id="3.40.630.10">
    <property type="entry name" value="Zn peptidases"/>
    <property type="match status" value="2"/>
</dbReference>
<dbReference type="HAMAP" id="MF_01690">
    <property type="entry name" value="DapE"/>
    <property type="match status" value="1"/>
</dbReference>
<dbReference type="InterPro" id="IPR001261">
    <property type="entry name" value="ArgE/DapE_CS"/>
</dbReference>
<dbReference type="InterPro" id="IPR036264">
    <property type="entry name" value="Bact_exopeptidase_dim_dom"/>
</dbReference>
<dbReference type="InterPro" id="IPR005941">
    <property type="entry name" value="DapE_proteobac"/>
</dbReference>
<dbReference type="InterPro" id="IPR002933">
    <property type="entry name" value="Peptidase_M20"/>
</dbReference>
<dbReference type="InterPro" id="IPR011650">
    <property type="entry name" value="Peptidase_M20_dimer"/>
</dbReference>
<dbReference type="InterPro" id="IPR050072">
    <property type="entry name" value="Peptidase_M20A"/>
</dbReference>
<dbReference type="NCBIfam" id="TIGR01246">
    <property type="entry name" value="dapE_proteo"/>
    <property type="match status" value="1"/>
</dbReference>
<dbReference type="NCBIfam" id="NF009557">
    <property type="entry name" value="PRK13009.1"/>
    <property type="match status" value="1"/>
</dbReference>
<dbReference type="PANTHER" id="PTHR43808">
    <property type="entry name" value="ACETYLORNITHINE DEACETYLASE"/>
    <property type="match status" value="1"/>
</dbReference>
<dbReference type="PANTHER" id="PTHR43808:SF31">
    <property type="entry name" value="N-ACETYL-L-CITRULLINE DEACETYLASE"/>
    <property type="match status" value="1"/>
</dbReference>
<dbReference type="Pfam" id="PF07687">
    <property type="entry name" value="M20_dimer"/>
    <property type="match status" value="1"/>
</dbReference>
<dbReference type="Pfam" id="PF01546">
    <property type="entry name" value="Peptidase_M20"/>
    <property type="match status" value="1"/>
</dbReference>
<dbReference type="SUPFAM" id="SSF55031">
    <property type="entry name" value="Bacterial exopeptidase dimerisation domain"/>
    <property type="match status" value="1"/>
</dbReference>
<dbReference type="SUPFAM" id="SSF53187">
    <property type="entry name" value="Zn-dependent exopeptidases"/>
    <property type="match status" value="1"/>
</dbReference>
<dbReference type="PROSITE" id="PS00759">
    <property type="entry name" value="ARGE_DAPE_CPG2_2"/>
    <property type="match status" value="1"/>
</dbReference>
<organism>
    <name type="scientific">Shewanella pealeana (strain ATCC 700345 / ANG-SQ1)</name>
    <dbReference type="NCBI Taxonomy" id="398579"/>
    <lineage>
        <taxon>Bacteria</taxon>
        <taxon>Pseudomonadati</taxon>
        <taxon>Pseudomonadota</taxon>
        <taxon>Gammaproteobacteria</taxon>
        <taxon>Alteromonadales</taxon>
        <taxon>Shewanellaceae</taxon>
        <taxon>Shewanella</taxon>
    </lineage>
</organism>
<sequence>MSQLQESAVLSLAKDLISRPSVTPLDEGCQSLMAERLSQAGFEIESMVFDDTTNMWARRGTQSPVFCFAGHTDVVPVGDLNRWHTPPFEPVVIDDYLHGRGAADMKGSLAAMLVATERFVNKHPDHQGSIAFLITSDEEGPFINGTTRVIDTLEARNEKITWSLVGEPSSTHKLGDIVKNGRRGSLTGNLTVKGIQGHVAYPHLADNPIHKAAPALDELARMKWDNGNEFFPPTSFQIANINGGTGASNVIPGALEVMFNFRYSTEVTAEILIERVLNILDAHGLDYDISWVYNGLPFLTGEGPLLEATKAAIKKVTGTDTDPQTSGGTSDGRFIAPTGAQVIEVGPVNATIHKVNECVKVSDLELLTDCYEAILENLLCK</sequence>
<gene>
    <name evidence="1" type="primary">dapE</name>
    <name type="ordered locus">Spea_1991</name>
</gene>
<evidence type="ECO:0000255" key="1">
    <source>
        <dbReference type="HAMAP-Rule" id="MF_01690"/>
    </source>
</evidence>